<comment type="function">
    <text evidence="4">L-glutamate acts as an excitatory neurotransmitter at many synapses in the central nervous system. The postsynaptic actions of glutamate are mediated by a variety of receptors that are named according to their selective agonists. Required for response to mechanical and osmotic stimuli.</text>
</comment>
<comment type="subcellular location">
    <subcellularLocation>
        <location evidence="7">Membrane</location>
        <topology evidence="7">Multi-pass membrane protein</topology>
    </subcellularLocation>
    <subcellularLocation>
        <location evidence="7">Postsynaptic cell membrane</location>
        <topology evidence="7">Multi-pass membrane protein</topology>
    </subcellularLocation>
</comment>
<comment type="alternative products">
    <event type="alternative splicing"/>
    <isoform>
        <id>Q10914-1</id>
        <name>b</name>
        <sequence type="displayed"/>
    </isoform>
    <isoform>
        <id>Q10914-2</id>
        <name>a</name>
        <sequence type="described" ref="VSP_008031"/>
    </isoform>
</comment>
<comment type="tissue specificity">
    <text evidence="3">Command interneurons of the locomotory control circuit (AIA, AIB, AVA, AVD, AVE, PVC, RIA, RIG and RIR) and motor neurons (AVG, M1, RMDD and RMDV).</text>
</comment>
<comment type="similarity">
    <text evidence="7">Belongs to the glutamate-gated ion channel (TC 1.A.10.1) family.</text>
</comment>
<proteinExistence type="evidence at protein level"/>
<gene>
    <name type="primary">glr-2</name>
    <name type="ORF">B0280.12/K04G7.2</name>
</gene>
<feature type="signal peptide" evidence="1">
    <location>
        <begin position="1"/>
        <end position="19"/>
    </location>
</feature>
<feature type="chain" id="PRO_0000011591" description="Glutamate receptor 2">
    <location>
        <begin position="20"/>
        <end position="977"/>
    </location>
</feature>
<feature type="topological domain" description="Extracellular" evidence="1">
    <location>
        <begin position="20"/>
        <end position="621"/>
    </location>
</feature>
<feature type="transmembrane region" description="Helical" evidence="1">
    <location>
        <begin position="622"/>
        <end position="642"/>
    </location>
</feature>
<feature type="topological domain" description="Cytoplasmic" evidence="1">
    <location>
        <begin position="643"/>
        <end position="695"/>
    </location>
</feature>
<feature type="transmembrane region" description="Helical" evidence="1">
    <location>
        <begin position="696"/>
        <end position="716"/>
    </location>
</feature>
<feature type="topological domain" description="Extracellular" evidence="1">
    <location>
        <begin position="717"/>
        <end position="898"/>
    </location>
</feature>
<feature type="transmembrane region" description="Helical" evidence="1">
    <location>
        <begin position="899"/>
        <end position="919"/>
    </location>
</feature>
<feature type="topological domain" description="Cytoplasmic" evidence="1">
    <location>
        <begin position="920"/>
        <end position="977"/>
    </location>
</feature>
<feature type="region of interest" description="Disordered" evidence="2">
    <location>
        <begin position="954"/>
        <end position="977"/>
    </location>
</feature>
<feature type="glycosylation site" description="N-linked (GlcNAc...) asparagine" evidence="1">
    <location>
        <position position="36"/>
    </location>
</feature>
<feature type="glycosylation site" description="N-linked (GlcNAc...) asparagine" evidence="1">
    <location>
        <position position="227"/>
    </location>
</feature>
<feature type="glycosylation site" description="N-linked (GlcNAc...) asparagine" evidence="1">
    <location>
        <position position="291"/>
    </location>
</feature>
<feature type="glycosylation site" description="N-linked (GlcNAc...) asparagine" evidence="1">
    <location>
        <position position="427"/>
    </location>
</feature>
<feature type="glycosylation site" description="N-linked (GlcNAc...) asparagine" evidence="1">
    <location>
        <position position="532"/>
    </location>
</feature>
<feature type="glycosylation site" description="N-linked (GlcNAc...) asparagine" evidence="5">
    <location>
        <position position="566"/>
    </location>
</feature>
<feature type="glycosylation site" description="N-linked (GlcNAc...) asparagine" evidence="1">
    <location>
        <position position="783"/>
    </location>
</feature>
<feature type="glycosylation site" description="N-linked (GlcNAc...) asparagine" evidence="1">
    <location>
        <position position="895"/>
    </location>
</feature>
<feature type="splice variant" id="VSP_008031" description="In isoform a." evidence="6">
    <location>
        <begin position="238"/>
        <end position="306"/>
    </location>
</feature>
<keyword id="KW-0025">Alternative splicing</keyword>
<keyword id="KW-1003">Cell membrane</keyword>
<keyword id="KW-0325">Glycoprotein</keyword>
<keyword id="KW-0407">Ion channel</keyword>
<keyword id="KW-0406">Ion transport</keyword>
<keyword id="KW-1071">Ligand-gated ion channel</keyword>
<keyword id="KW-0472">Membrane</keyword>
<keyword id="KW-0628">Postsynaptic cell membrane</keyword>
<keyword id="KW-0675">Receptor</keyword>
<keyword id="KW-1185">Reference proteome</keyword>
<keyword id="KW-0732">Signal</keyword>
<keyword id="KW-0770">Synapse</keyword>
<keyword id="KW-0812">Transmembrane</keyword>
<keyword id="KW-1133">Transmembrane helix</keyword>
<keyword id="KW-0813">Transport</keyword>
<organism>
    <name type="scientific">Caenorhabditis elegans</name>
    <dbReference type="NCBI Taxonomy" id="6239"/>
    <lineage>
        <taxon>Eukaryota</taxon>
        <taxon>Metazoa</taxon>
        <taxon>Ecdysozoa</taxon>
        <taxon>Nematoda</taxon>
        <taxon>Chromadorea</taxon>
        <taxon>Rhabditida</taxon>
        <taxon>Rhabditina</taxon>
        <taxon>Rhabditomorpha</taxon>
        <taxon>Rhabditoidea</taxon>
        <taxon>Rhabditidae</taxon>
        <taxon>Peloderinae</taxon>
        <taxon>Caenorhabditis</taxon>
    </lineage>
</organism>
<evidence type="ECO:0000255" key="1"/>
<evidence type="ECO:0000256" key="2">
    <source>
        <dbReference type="SAM" id="MobiDB-lite"/>
    </source>
</evidence>
<evidence type="ECO:0000269" key="3">
    <source>
    </source>
</evidence>
<evidence type="ECO:0000269" key="4">
    <source>
    </source>
</evidence>
<evidence type="ECO:0000269" key="5">
    <source>
    </source>
</evidence>
<evidence type="ECO:0000303" key="6">
    <source>
    </source>
</evidence>
<evidence type="ECO:0000305" key="7"/>
<reference key="1">
    <citation type="journal article" date="2002" name="Neuron">
        <title>Decoding of polymodal sensory stimuli by postsynaptic glutamate receptors in C. elegans.</title>
        <authorList>
            <person name="Mellem J.E."/>
            <person name="Brockie P.J."/>
            <person name="Zheng Y."/>
            <person name="Madsen D.M."/>
            <person name="Maricq A.V."/>
        </authorList>
    </citation>
    <scope>NUCLEOTIDE SEQUENCE [MRNA] (ISOFORM B)</scope>
    <scope>FUNCTION</scope>
</reference>
<reference key="2">
    <citation type="journal article" date="1998" name="Science">
        <title>Genome sequence of the nematode C. elegans: a platform for investigating biology.</title>
        <authorList>
            <consortium name="The C. elegans sequencing consortium"/>
        </authorList>
    </citation>
    <scope>NUCLEOTIDE SEQUENCE [LARGE SCALE GENOMIC DNA]</scope>
    <scope>ALTERNATIVE SPLICING</scope>
    <source>
        <strain>Bristol N2</strain>
    </source>
</reference>
<reference key="3">
    <citation type="journal article" date="2001" name="J. Neurosci.">
        <title>Differential expression of glutamate receptor subunits in the nervous system of Caenorhabditis elegans and their regulation by the homeodomain protein UNC-42.</title>
        <authorList>
            <person name="Brockie P.J."/>
            <person name="Madsen D.M."/>
            <person name="Zheng Y."/>
            <person name="Mellem J."/>
            <person name="Maricq A.V."/>
        </authorList>
    </citation>
    <scope>NUCLEOTIDE SEQUENCE [MRNA] OF 491-920 (ISOFORMS A AND B)</scope>
    <scope>TISSUE SPECIFICITY</scope>
</reference>
<reference key="4">
    <citation type="journal article" date="2007" name="Mol. Cell. Proteomics">
        <title>Proteomics reveals N-linked glycoprotein diversity in Caenorhabditis elegans and suggests an atypical translocation mechanism for integral membrane proteins.</title>
        <authorList>
            <person name="Kaji H."/>
            <person name="Kamiie J."/>
            <person name="Kawakami H."/>
            <person name="Kido K."/>
            <person name="Yamauchi Y."/>
            <person name="Shinkawa T."/>
            <person name="Taoka M."/>
            <person name="Takahashi N."/>
            <person name="Isobe T."/>
        </authorList>
    </citation>
    <scope>GLYCOSYLATION [LARGE SCALE ANALYSIS] AT ASN-566</scope>
    <scope>IDENTIFICATION BY MASS SPECTROMETRY</scope>
    <source>
        <strain>Bristol N2</strain>
    </source>
</reference>
<sequence length="977" mass="111789">MNKNLLVFGFLIFVKIGETSKKFPLRAFVASTDIDNDTAHAIIEMLRLAEMTFNALSDVDFDVLLGTRDLPPMEMATMMWNLNRIICDEMKLGYMLMLAGTNFKNYGIYEDIANHMKMPLIDWEPSKSENIGKTTENNPMIFSVAPSAEQLLIDYIQYKGWRDVVYIHDGKNADRTLRTMFSYLHEKSPKYQLFVDNYVAPSDEEMFKEFLNEFHRRISTQHTLKSNDSSEEIDEPIPVNVIVDLEGSYRTRAFLRALEESVLVKKEYHYVFSNFDVDETDLSGFHFSLINITIFRIFDKNNKKFLKTRAEFHDVYRGGFSNTDSIPTAAAFAHDAILVAGKALQIAMNEHGKGIFDKSFVRHQLFNRGRKGLYCRPHEDQTESRQFETFEHGKKIAEAIKKVVLTDKDGTLTGRIQFDKVTGKRTNFSAEIVEIKPGVNSLNSIWERFQWAEGEGFLLGGERYVQEKKKDSSQTRKGILPSKPWQLRFNVVTVLVKPFVMLKRRNPGEPELKGNDRFEGYCIDLLNLLAKNITGFEYDVFISDGNKYGSRQADGSWDGMIGYLLNETADVAVAPLTITQERERAVDFSKPFMTTGISIMIKKPEKQEFNIFSFMEPLGMTIWIFTLSSYFGVSLTIFLVSWFSPYEKRIEFKRGEFTVTNEFTLYNSLWFTLAAFMQQGTDILPRAVSGRIASSCWWFFTLIIVSSYTANLAAFLTLERMTPPIESVEDLANQNKILYGVNEGGSTAAFFEDSIVPLYKKMWNFMVSTTQKQIELEKQSITNSTSNRIFVSSYADGIEKVRTSKGKYAFLLEETTNNYESGRRPCDTMKVGQNLNTLGYGIATKIGNPLRVSLNLAILYLSEKGELKKLENKWWYDRGQCDTGTSDGGTSSSLNLSKVAGIFYILLAGMVLSMCTALVEFLFRKNKENREKERNRMRSSRPLKPGILASCERAKQKQLQNRRTKSEEVSTPRSTLF</sequence>
<name>GLR2_CAEEL</name>
<protein>
    <recommendedName>
        <fullName>Glutamate receptor 2</fullName>
    </recommendedName>
</protein>
<accession>Q10914</accession>
<accession>Q86GT2</accession>
<accession>Q9BK24</accession>
<dbReference type="EMBL" id="AF318606">
    <property type="protein sequence ID" value="AAK01094.2"/>
    <property type="molecule type" value="mRNA"/>
</dbReference>
<dbReference type="EMBL" id="FO080148">
    <property type="protein sequence ID" value="CCD61608.1"/>
    <property type="molecule type" value="Genomic_DNA"/>
</dbReference>
<dbReference type="EMBL" id="FO080148">
    <property type="protein sequence ID" value="CCD61609.1"/>
    <property type="molecule type" value="Genomic_DNA"/>
</dbReference>
<dbReference type="PIR" id="T15306">
    <property type="entry name" value="T15306"/>
</dbReference>
<dbReference type="RefSeq" id="NP_001021113.1">
    <molecule id="Q10914-2"/>
    <property type="nucleotide sequence ID" value="NM_001025942.4"/>
</dbReference>
<dbReference type="RefSeq" id="NP_001021114.1">
    <molecule id="Q10914-1"/>
    <property type="nucleotide sequence ID" value="NM_001025943.3"/>
</dbReference>
<dbReference type="SMR" id="Q10914"/>
<dbReference type="BioGRID" id="41211">
    <property type="interactions" value="3"/>
</dbReference>
<dbReference type="FunCoup" id="Q10914">
    <property type="interactions" value="384"/>
</dbReference>
<dbReference type="STRING" id="6239.B0280.12b.1"/>
<dbReference type="GlyCosmos" id="Q10914">
    <property type="glycosylation" value="8 sites, No reported glycans"/>
</dbReference>
<dbReference type="iPTMnet" id="Q10914"/>
<dbReference type="PaxDb" id="6239-B0280.12b"/>
<dbReference type="EnsemblMetazoa" id="B0280.12a.1">
    <molecule id="Q10914-2"/>
    <property type="protein sequence ID" value="B0280.12a.1"/>
    <property type="gene ID" value="WBGene00001613"/>
</dbReference>
<dbReference type="EnsemblMetazoa" id="B0280.12b.1">
    <molecule id="Q10914-1"/>
    <property type="protein sequence ID" value="B0280.12b.1"/>
    <property type="gene ID" value="WBGene00001613"/>
</dbReference>
<dbReference type="GeneID" id="175999"/>
<dbReference type="KEGG" id="cel:CELE_B0280.12"/>
<dbReference type="UCSC" id="B0280.12b">
    <molecule id="Q10914-1"/>
    <property type="organism name" value="c. elegans"/>
</dbReference>
<dbReference type="AGR" id="WB:WBGene00001613"/>
<dbReference type="CTD" id="175999"/>
<dbReference type="WormBase" id="B0280.12a">
    <property type="protein sequence ID" value="CE31400"/>
    <property type="gene ID" value="WBGene00001613"/>
    <property type="gene designation" value="glr-2"/>
</dbReference>
<dbReference type="WormBase" id="B0280.12b">
    <property type="protein sequence ID" value="CE33547"/>
    <property type="gene ID" value="WBGene00001613"/>
    <property type="gene designation" value="glr-2"/>
</dbReference>
<dbReference type="eggNOG" id="KOG1054">
    <property type="taxonomic scope" value="Eukaryota"/>
</dbReference>
<dbReference type="InParanoid" id="Q10914"/>
<dbReference type="OMA" id="RIASSCW"/>
<dbReference type="OrthoDB" id="5984008at2759"/>
<dbReference type="PhylomeDB" id="Q10914"/>
<dbReference type="Reactome" id="R-CEL-204005">
    <property type="pathway name" value="COPII-mediated vesicle transport"/>
</dbReference>
<dbReference type="Reactome" id="R-CEL-399710">
    <property type="pathway name" value="Activation of AMPA receptors"/>
</dbReference>
<dbReference type="Reactome" id="R-CEL-438066">
    <property type="pathway name" value="Unblocking of NMDA receptors, glutamate binding and activation"/>
</dbReference>
<dbReference type="Reactome" id="R-CEL-5694530">
    <property type="pathway name" value="Cargo concentration in the ER"/>
</dbReference>
<dbReference type="Reactome" id="R-CEL-8849932">
    <property type="pathway name" value="Synaptic adhesion-like molecules"/>
</dbReference>
<dbReference type="PRO" id="PR:Q10914"/>
<dbReference type="Proteomes" id="UP000001940">
    <property type="component" value="Chromosome III"/>
</dbReference>
<dbReference type="Bgee" id="WBGene00001613">
    <property type="expression patterns" value="Expressed in pharyngeal muscle cell (C elegans) and 3 other cell types or tissues"/>
</dbReference>
<dbReference type="GO" id="GO:0005886">
    <property type="term" value="C:plasma membrane"/>
    <property type="evidence" value="ECO:0000318"/>
    <property type="project" value="GO_Central"/>
</dbReference>
<dbReference type="GO" id="GO:0098839">
    <property type="term" value="C:postsynaptic density membrane"/>
    <property type="evidence" value="ECO:0000318"/>
    <property type="project" value="GO_Central"/>
</dbReference>
<dbReference type="GO" id="GO:0008066">
    <property type="term" value="F:glutamate receptor activity"/>
    <property type="evidence" value="ECO:0000318"/>
    <property type="project" value="GO_Central"/>
</dbReference>
<dbReference type="GO" id="GO:1904315">
    <property type="term" value="F:transmitter-gated monoatomic ion channel activity involved in regulation of postsynaptic membrane potential"/>
    <property type="evidence" value="ECO:0000318"/>
    <property type="project" value="GO_Central"/>
</dbReference>
<dbReference type="GO" id="GO:0050804">
    <property type="term" value="P:modulation of chemical synaptic transmission"/>
    <property type="evidence" value="ECO:0000318"/>
    <property type="project" value="GO_Central"/>
</dbReference>
<dbReference type="GO" id="GO:0035249">
    <property type="term" value="P:synaptic transmission, glutamatergic"/>
    <property type="evidence" value="ECO:0000318"/>
    <property type="project" value="GO_Central"/>
</dbReference>
<dbReference type="CDD" id="cd06380">
    <property type="entry name" value="PBP1_iGluR_AMPA"/>
    <property type="match status" value="1"/>
</dbReference>
<dbReference type="FunFam" id="1.10.287.70:FF:000105">
    <property type="entry name" value="Eye-enriched kainate receptor, isoform A"/>
    <property type="match status" value="1"/>
</dbReference>
<dbReference type="FunFam" id="3.40.190.10:FF:000189">
    <property type="entry name" value="Glutamate receptor 1"/>
    <property type="match status" value="1"/>
</dbReference>
<dbReference type="FunFam" id="3.40.190.10:FF:000241">
    <property type="entry name" value="Glutamate receptor 2"/>
    <property type="match status" value="1"/>
</dbReference>
<dbReference type="FunFam" id="3.40.50.2300:FF:000760">
    <property type="entry name" value="Glutamate receptor 2"/>
    <property type="match status" value="1"/>
</dbReference>
<dbReference type="Gene3D" id="1.10.287.70">
    <property type="match status" value="1"/>
</dbReference>
<dbReference type="Gene3D" id="3.40.50.2300">
    <property type="match status" value="2"/>
</dbReference>
<dbReference type="Gene3D" id="3.40.190.10">
    <property type="entry name" value="Periplasmic binding protein-like II"/>
    <property type="match status" value="2"/>
</dbReference>
<dbReference type="InterPro" id="IPR001828">
    <property type="entry name" value="ANF_lig-bd_rcpt"/>
</dbReference>
<dbReference type="InterPro" id="IPR019594">
    <property type="entry name" value="Glu/Gly-bd"/>
</dbReference>
<dbReference type="InterPro" id="IPR001508">
    <property type="entry name" value="Iono_Glu_rcpt_met"/>
</dbReference>
<dbReference type="InterPro" id="IPR015683">
    <property type="entry name" value="Ionotropic_Glu_rcpt"/>
</dbReference>
<dbReference type="InterPro" id="IPR001320">
    <property type="entry name" value="Iontro_rcpt_C"/>
</dbReference>
<dbReference type="InterPro" id="IPR028082">
    <property type="entry name" value="Peripla_BP_I"/>
</dbReference>
<dbReference type="PANTHER" id="PTHR18966">
    <property type="entry name" value="IONOTROPIC GLUTAMATE RECEPTOR"/>
    <property type="match status" value="1"/>
</dbReference>
<dbReference type="Pfam" id="PF01094">
    <property type="entry name" value="ANF_receptor"/>
    <property type="match status" value="1"/>
</dbReference>
<dbReference type="Pfam" id="PF00060">
    <property type="entry name" value="Lig_chan"/>
    <property type="match status" value="1"/>
</dbReference>
<dbReference type="Pfam" id="PF10613">
    <property type="entry name" value="Lig_chan-Glu_bd"/>
    <property type="match status" value="1"/>
</dbReference>
<dbReference type="PRINTS" id="PR00177">
    <property type="entry name" value="NMDARECEPTOR"/>
</dbReference>
<dbReference type="SMART" id="SM00918">
    <property type="entry name" value="Lig_chan-Glu_bd"/>
    <property type="match status" value="1"/>
</dbReference>
<dbReference type="SMART" id="SM00079">
    <property type="entry name" value="PBPe"/>
    <property type="match status" value="1"/>
</dbReference>
<dbReference type="SUPFAM" id="SSF53822">
    <property type="entry name" value="Periplasmic binding protein-like I"/>
    <property type="match status" value="1"/>
</dbReference>
<dbReference type="SUPFAM" id="SSF53850">
    <property type="entry name" value="Periplasmic binding protein-like II"/>
    <property type="match status" value="1"/>
</dbReference>